<gene>
    <name evidence="1" type="primary">frr</name>
    <name type="ordered locus">YPN_2953</name>
    <name type="ORF">YP516_3343</name>
</gene>
<name>RRF_YERPN</name>
<keyword id="KW-0963">Cytoplasm</keyword>
<keyword id="KW-0648">Protein biosynthesis</keyword>
<feature type="chain" id="PRO_1000003315" description="Ribosome-recycling factor">
    <location>
        <begin position="1"/>
        <end position="185"/>
    </location>
</feature>
<dbReference type="EMBL" id="CP000305">
    <property type="protein sequence ID" value="ABG19280.1"/>
    <property type="molecule type" value="Genomic_DNA"/>
</dbReference>
<dbReference type="EMBL" id="ACNQ01000017">
    <property type="protein sequence ID" value="EEO75429.1"/>
    <property type="molecule type" value="Genomic_DNA"/>
</dbReference>
<dbReference type="RefSeq" id="WP_002212134.1">
    <property type="nucleotide sequence ID" value="NZ_ACNQ01000017.1"/>
</dbReference>
<dbReference type="SMR" id="Q1CFF0"/>
<dbReference type="GeneID" id="57977514"/>
<dbReference type="KEGG" id="ypn:YPN_2953"/>
<dbReference type="HOGENOM" id="CLU_073981_2_1_6"/>
<dbReference type="Proteomes" id="UP000008936">
    <property type="component" value="Chromosome"/>
</dbReference>
<dbReference type="GO" id="GO:0005829">
    <property type="term" value="C:cytosol"/>
    <property type="evidence" value="ECO:0007669"/>
    <property type="project" value="GOC"/>
</dbReference>
<dbReference type="GO" id="GO:0043023">
    <property type="term" value="F:ribosomal large subunit binding"/>
    <property type="evidence" value="ECO:0007669"/>
    <property type="project" value="TreeGrafter"/>
</dbReference>
<dbReference type="GO" id="GO:0002184">
    <property type="term" value="P:cytoplasmic translational termination"/>
    <property type="evidence" value="ECO:0007669"/>
    <property type="project" value="TreeGrafter"/>
</dbReference>
<dbReference type="CDD" id="cd00520">
    <property type="entry name" value="RRF"/>
    <property type="match status" value="1"/>
</dbReference>
<dbReference type="FunFam" id="1.10.132.20:FF:000001">
    <property type="entry name" value="Ribosome-recycling factor"/>
    <property type="match status" value="1"/>
</dbReference>
<dbReference type="FunFam" id="3.30.1360.40:FF:000001">
    <property type="entry name" value="Ribosome-recycling factor"/>
    <property type="match status" value="1"/>
</dbReference>
<dbReference type="Gene3D" id="3.30.1360.40">
    <property type="match status" value="1"/>
</dbReference>
<dbReference type="Gene3D" id="1.10.132.20">
    <property type="entry name" value="Ribosome-recycling factor"/>
    <property type="match status" value="1"/>
</dbReference>
<dbReference type="HAMAP" id="MF_00040">
    <property type="entry name" value="RRF"/>
    <property type="match status" value="1"/>
</dbReference>
<dbReference type="InterPro" id="IPR002661">
    <property type="entry name" value="Ribosome_recyc_fac"/>
</dbReference>
<dbReference type="InterPro" id="IPR023584">
    <property type="entry name" value="Ribosome_recyc_fac_dom"/>
</dbReference>
<dbReference type="InterPro" id="IPR036191">
    <property type="entry name" value="RRF_sf"/>
</dbReference>
<dbReference type="NCBIfam" id="TIGR00496">
    <property type="entry name" value="frr"/>
    <property type="match status" value="1"/>
</dbReference>
<dbReference type="PANTHER" id="PTHR20982:SF3">
    <property type="entry name" value="MITOCHONDRIAL RIBOSOME RECYCLING FACTOR PSEUDO 1"/>
    <property type="match status" value="1"/>
</dbReference>
<dbReference type="PANTHER" id="PTHR20982">
    <property type="entry name" value="RIBOSOME RECYCLING FACTOR"/>
    <property type="match status" value="1"/>
</dbReference>
<dbReference type="Pfam" id="PF01765">
    <property type="entry name" value="RRF"/>
    <property type="match status" value="1"/>
</dbReference>
<dbReference type="SUPFAM" id="SSF55194">
    <property type="entry name" value="Ribosome recycling factor, RRF"/>
    <property type="match status" value="1"/>
</dbReference>
<accession>Q1CFF0</accession>
<accession>C4GWX9</accession>
<evidence type="ECO:0000255" key="1">
    <source>
        <dbReference type="HAMAP-Rule" id="MF_00040"/>
    </source>
</evidence>
<protein>
    <recommendedName>
        <fullName evidence="1">Ribosome-recycling factor</fullName>
        <shortName evidence="1">RRF</shortName>
    </recommendedName>
    <alternativeName>
        <fullName evidence="1">Ribosome-releasing factor</fullName>
    </alternativeName>
</protein>
<organism>
    <name type="scientific">Yersinia pestis bv. Antiqua (strain Nepal516)</name>
    <dbReference type="NCBI Taxonomy" id="377628"/>
    <lineage>
        <taxon>Bacteria</taxon>
        <taxon>Pseudomonadati</taxon>
        <taxon>Pseudomonadota</taxon>
        <taxon>Gammaproteobacteria</taxon>
        <taxon>Enterobacterales</taxon>
        <taxon>Yersiniaceae</taxon>
        <taxon>Yersinia</taxon>
    </lineage>
</organism>
<proteinExistence type="inferred from homology"/>
<sequence>MINEIRKDAEVRMEKCLEAFQNHISKIRTGRASPSILDGIQVEYYGTATPLRQLANIVVEDSRTLALTVFDRSLSAAVEKAIMTSDLGLNPSSAGTVIRVPLPALTEERRKDLIKVVRAEAEQGRVSIRNVRRDANDKVKALLKDKEISEDEDRRSQDDVQKLTDAYIKKVDAALAVKEAELMDF</sequence>
<reference key="1">
    <citation type="journal article" date="2006" name="J. Bacteriol.">
        <title>Complete genome sequence of Yersinia pestis strains Antiqua and Nepal516: evidence of gene reduction in an emerging pathogen.</title>
        <authorList>
            <person name="Chain P.S.G."/>
            <person name="Hu P."/>
            <person name="Malfatti S.A."/>
            <person name="Radnedge L."/>
            <person name="Larimer F."/>
            <person name="Vergez L.M."/>
            <person name="Worsham P."/>
            <person name="Chu M.C."/>
            <person name="Andersen G.L."/>
        </authorList>
    </citation>
    <scope>NUCLEOTIDE SEQUENCE [LARGE SCALE GENOMIC DNA]</scope>
    <source>
        <strain>Nepal516</strain>
    </source>
</reference>
<reference key="2">
    <citation type="submission" date="2009-04" db="EMBL/GenBank/DDBJ databases">
        <title>Yersinia pestis Nepal516A whole genome shotgun sequencing project.</title>
        <authorList>
            <person name="Plunkett G. III"/>
            <person name="Anderson B.D."/>
            <person name="Baumler D.J."/>
            <person name="Burland V."/>
            <person name="Cabot E.L."/>
            <person name="Glasner J.D."/>
            <person name="Mau B."/>
            <person name="Neeno-Eckwall E."/>
            <person name="Perna N.T."/>
            <person name="Munk A.C."/>
            <person name="Tapia R."/>
            <person name="Green L.D."/>
            <person name="Rogers Y.C."/>
            <person name="Detter J.C."/>
            <person name="Bruce D.C."/>
            <person name="Brettin T.S."/>
        </authorList>
    </citation>
    <scope>NUCLEOTIDE SEQUENCE [LARGE SCALE GENOMIC DNA]</scope>
    <source>
        <strain>Nepal516</strain>
    </source>
</reference>
<comment type="function">
    <text evidence="1">Responsible for the release of ribosomes from messenger RNA at the termination of protein biosynthesis. May increase the efficiency of translation by recycling ribosomes from one round of translation to another.</text>
</comment>
<comment type="subcellular location">
    <subcellularLocation>
        <location evidence="1">Cytoplasm</location>
    </subcellularLocation>
</comment>
<comment type="similarity">
    <text evidence="1">Belongs to the RRF family.</text>
</comment>